<proteinExistence type="inferred from homology"/>
<reference key="1">
    <citation type="submission" date="2003-01" db="EMBL/GenBank/DDBJ databases">
        <title>Molecular evolution of the H (FUT1) gene in New World monkeys (Primates, Platyrrhini): evidence of divergent evolution and purifying selection.</title>
        <authorList>
            <person name="Borges B.N."/>
            <person name="Harada M.L."/>
        </authorList>
    </citation>
    <scope>NUCLEOTIDE SEQUENCE [GENOMIC DNA]</scope>
</reference>
<sequence>MWPLSHRHLCLAFLLVCVLSAISFFLHIYQDSIRHGLGLSILCPDRLVTAPVAIFCLPDTPMSPNTSSPCPQHPASLSGTWTIYPDGRFGNQMGQYATLLALAQLNGRRAFILPAMHATLAPVFRITLPVLAPEVDSSTPWRELQLHDWMSEEYADLGDPFLKLSGFPCSWTFFHHLREQIRSEFTLHDHLREEAQSVLRRLRLGRSGDRPRTFVGVHVRRGDYLQVMPQRWKGVVGSSAYLREAMDWFRARHEAPVFVVTSNGMEWCRENIDASKGDVMFAGDGQEASPWKDFALLTQCNHTIMTIGTFGFWAAYLAGGDTVYLANFTLPDSEFLKIFKPEAAFLPEWVGINADLSSLWTLAEP</sequence>
<evidence type="ECO:0000250" key="1">
    <source>
        <dbReference type="UniProtKB" id="F6Q1T7"/>
    </source>
</evidence>
<evidence type="ECO:0000250" key="2">
    <source>
        <dbReference type="UniProtKB" id="O09160"/>
    </source>
</evidence>
<evidence type="ECO:0000250" key="3">
    <source>
        <dbReference type="UniProtKB" id="P19526"/>
    </source>
</evidence>
<evidence type="ECO:0000255" key="4"/>
<evidence type="ECO:0000305" key="5"/>
<name>FUT1_LEOFU</name>
<keyword id="KW-0325">Glycoprotein</keyword>
<keyword id="KW-0328">Glycosyltransferase</keyword>
<keyword id="KW-0333">Golgi apparatus</keyword>
<keyword id="KW-0443">Lipid metabolism</keyword>
<keyword id="KW-0472">Membrane</keyword>
<keyword id="KW-0735">Signal-anchor</keyword>
<keyword id="KW-0808">Transferase</keyword>
<keyword id="KW-0812">Transmembrane</keyword>
<keyword id="KW-1133">Transmembrane helix</keyword>
<organism>
    <name type="scientific">Leontocebus fuscicollis</name>
    <name type="common">Brown-mantled tamarin</name>
    <name type="synonym">Saguinus fuscicollis</name>
    <dbReference type="NCBI Taxonomy" id="9487"/>
    <lineage>
        <taxon>Eukaryota</taxon>
        <taxon>Metazoa</taxon>
        <taxon>Chordata</taxon>
        <taxon>Craniata</taxon>
        <taxon>Vertebrata</taxon>
        <taxon>Euteleostomi</taxon>
        <taxon>Mammalia</taxon>
        <taxon>Eutheria</taxon>
        <taxon>Euarchontoglires</taxon>
        <taxon>Primates</taxon>
        <taxon>Haplorrhini</taxon>
        <taxon>Platyrrhini</taxon>
        <taxon>Cebidae</taxon>
        <taxon>Callitrichinae</taxon>
        <taxon>Leontocebus</taxon>
    </lineage>
</organism>
<accession>Q866D2</accession>
<comment type="function">
    <text evidence="2 3">Catalyzes the transfer of L-fucose, from a guanosine diphosphate-beta-L-fucose, to the terminal galactose residue of glycoconjugates through an alpha(1,2) linkage leading to H antigen synthesis that is an intermediate substrate in the synthesis of ABO blood group antigens. H antigen is essential for maturation of the glomerular layer of the main olfactory bulb, in cell migration and early cell-cell contacts during tumor associated angiogenesis (By similarity). Preferentially fucosylates soluble lactose and to a lesser extent fucosylates glycolipids gangliosides GA1 and GM1a (By similarity).</text>
</comment>
<comment type="catalytic activity">
    <reaction evidence="3">
        <text>a beta-D-galactosyl-(1-&gt;4)-N-acetyl-beta-D-glucosaminyl derivative + GDP-beta-L-fucose = an alpha-L-Fuc-(1-&gt;2)-beta-D-Gal-(1-&gt;4)-beta-D-GlcNAc derivative + GDP + H(+)</text>
        <dbReference type="Rhea" id="RHEA:50668"/>
        <dbReference type="ChEBI" id="CHEBI:15378"/>
        <dbReference type="ChEBI" id="CHEBI:57273"/>
        <dbReference type="ChEBI" id="CHEBI:58189"/>
        <dbReference type="ChEBI" id="CHEBI:133507"/>
        <dbReference type="ChEBI" id="CHEBI:133510"/>
        <dbReference type="EC" id="2.4.1.344"/>
    </reaction>
</comment>
<comment type="catalytic activity">
    <reaction evidence="2">
        <text>a ganglioside GA1 + GDP-beta-L-fucose = a ganglioside Fuc-GA1 + GDP + H(+)</text>
        <dbReference type="Rhea" id="RHEA:48320"/>
        <dbReference type="ChEBI" id="CHEBI:15378"/>
        <dbReference type="ChEBI" id="CHEBI:57273"/>
        <dbReference type="ChEBI" id="CHEBI:58189"/>
        <dbReference type="ChEBI" id="CHEBI:88069"/>
        <dbReference type="ChEBI" id="CHEBI:90262"/>
    </reaction>
    <physiologicalReaction direction="left-to-right" evidence="2">
        <dbReference type="Rhea" id="RHEA:48321"/>
    </physiologicalReaction>
</comment>
<comment type="catalytic activity">
    <reaction evidence="2">
        <text>a beta-D-Gal-(1-&gt;3)-beta-D-GlcNAc-(1-&gt;3)-beta-D-Gal-(1-&gt;4)-beta-D-Glc-(1&lt;-&gt;1')-Cer(d18:1(4E)) + GDP-beta-L-fucose = alpha-L-fucosyl-(1-&gt;2)- beta-D-galactosyl-(1-&gt;3)-N-acetyl-beta-D-glucosaminyl-(1-&gt;3)-beta-D-galactosyl-(1-&gt;4)-beta-D-glucosyl-(1&lt;-&gt;1')-N-acylsphing-4-enine + GDP + H(+)</text>
        <dbReference type="Rhea" id="RHEA:32175"/>
        <dbReference type="ChEBI" id="CHEBI:15378"/>
        <dbReference type="ChEBI" id="CHEBI:17292"/>
        <dbReference type="ChEBI" id="CHEBI:28743"/>
        <dbReference type="ChEBI" id="CHEBI:57273"/>
        <dbReference type="ChEBI" id="CHEBI:58189"/>
        <dbReference type="EC" id="2.4.1.69"/>
    </reaction>
    <physiologicalReaction direction="left-to-right" evidence="2">
        <dbReference type="Rhea" id="RHEA:32176"/>
    </physiologicalReaction>
</comment>
<comment type="catalytic activity">
    <reaction evidence="2">
        <text>a neolactoside nLc4Cer(d18:1(4E)) + GDP-beta-L-fucose = a neolactoside IV(2)-alpha-Fuc-nLc4Cer(d18:1(4E)) + GDP + H(+)</text>
        <dbReference type="Rhea" id="RHEA:48304"/>
        <dbReference type="ChEBI" id="CHEBI:15378"/>
        <dbReference type="ChEBI" id="CHEBI:17006"/>
        <dbReference type="ChEBI" id="CHEBI:28691"/>
        <dbReference type="ChEBI" id="CHEBI:57273"/>
        <dbReference type="ChEBI" id="CHEBI:58189"/>
    </reaction>
    <physiologicalReaction direction="left-to-right" evidence="2">
        <dbReference type="Rhea" id="RHEA:48305"/>
    </physiologicalReaction>
</comment>
<comment type="catalytic activity">
    <reaction evidence="1">
        <text>a ganglioside GM1 + GDP-beta-L-fucose = a ganglioside Fuc-GM1 + GDP + H(+)</text>
        <dbReference type="Rhea" id="RHEA:48292"/>
        <dbReference type="ChEBI" id="CHEBI:15378"/>
        <dbReference type="ChEBI" id="CHEBI:57273"/>
        <dbReference type="ChEBI" id="CHEBI:58189"/>
        <dbReference type="ChEBI" id="CHEBI:82639"/>
        <dbReference type="ChEBI" id="CHEBI:90189"/>
    </reaction>
    <physiologicalReaction direction="left-to-right" evidence="1">
        <dbReference type="Rhea" id="RHEA:48293"/>
    </physiologicalReaction>
</comment>
<comment type="catalytic activity">
    <reaction evidence="1">
        <text>beta-D-galactosyl-(1-&gt;3)-N-acetyl-D-galactosamine + GDP-beta-L-fucose = alpha-L-fucosyl-(1-&gt;2)-beta-D-galactosyl-(1-&gt;3)-N-acetyl-D-galactosamine + GDP + H(+)</text>
        <dbReference type="Rhea" id="RHEA:62964"/>
        <dbReference type="ChEBI" id="CHEBI:15378"/>
        <dbReference type="ChEBI" id="CHEBI:57273"/>
        <dbReference type="ChEBI" id="CHEBI:58189"/>
        <dbReference type="ChEBI" id="CHEBI:84728"/>
        <dbReference type="ChEBI" id="CHEBI:546807"/>
    </reaction>
    <physiologicalReaction direction="left-to-right" evidence="1">
        <dbReference type="Rhea" id="RHEA:62965"/>
    </physiologicalReaction>
</comment>
<comment type="pathway">
    <text evidence="3">Protein modification; protein glycosylation.</text>
</comment>
<comment type="subcellular location">
    <subcellularLocation>
        <location evidence="2">Golgi apparatus</location>
        <location evidence="2">Golgi stack membrane</location>
        <topology evidence="2">Single-pass type II membrane protein</topology>
    </subcellularLocation>
    <text evidence="2">Membrane-bound form in trans cisternae of Golgi.</text>
</comment>
<comment type="similarity">
    <text evidence="5">Belongs to the glycosyltransferase 11 family.</text>
</comment>
<dbReference type="EC" id="2.4.1.69" evidence="2"/>
<dbReference type="EC" id="2.4.1.344" evidence="3"/>
<dbReference type="EMBL" id="AY219636">
    <property type="protein sequence ID" value="AAO43078.1"/>
    <property type="molecule type" value="Genomic_DNA"/>
</dbReference>
<dbReference type="SMR" id="Q866D2"/>
<dbReference type="CAZy" id="GT11">
    <property type="family name" value="Glycosyltransferase Family 11"/>
</dbReference>
<dbReference type="GlyCosmos" id="Q866D2">
    <property type="glycosylation" value="3 sites, No reported glycans"/>
</dbReference>
<dbReference type="UniPathway" id="UPA00378"/>
<dbReference type="GO" id="GO:0032580">
    <property type="term" value="C:Golgi cisterna membrane"/>
    <property type="evidence" value="ECO:0007669"/>
    <property type="project" value="UniProtKB-SubCell"/>
</dbReference>
<dbReference type="GO" id="GO:0031127">
    <property type="term" value="F:alpha-(1,2)-fucosyltransferase activity"/>
    <property type="evidence" value="ECO:0000250"/>
    <property type="project" value="UniProtKB"/>
</dbReference>
<dbReference type="GO" id="GO:0008107">
    <property type="term" value="F:galactoside 2-alpha-L-fucosyltransferase activity"/>
    <property type="evidence" value="ECO:0007669"/>
    <property type="project" value="UniProtKB-EC"/>
</dbReference>
<dbReference type="GO" id="GO:0005975">
    <property type="term" value="P:carbohydrate metabolic process"/>
    <property type="evidence" value="ECO:0007669"/>
    <property type="project" value="InterPro"/>
</dbReference>
<dbReference type="GO" id="GO:0036065">
    <property type="term" value="P:fucosylation"/>
    <property type="evidence" value="ECO:0000250"/>
    <property type="project" value="UniProtKB"/>
</dbReference>
<dbReference type="GO" id="GO:0006629">
    <property type="term" value="P:lipid metabolic process"/>
    <property type="evidence" value="ECO:0007669"/>
    <property type="project" value="UniProtKB-KW"/>
</dbReference>
<dbReference type="GO" id="GO:0021772">
    <property type="term" value="P:olfactory bulb development"/>
    <property type="evidence" value="ECO:0000250"/>
    <property type="project" value="UniProtKB"/>
</dbReference>
<dbReference type="GO" id="GO:0001954">
    <property type="term" value="P:positive regulation of cell-matrix adhesion"/>
    <property type="evidence" value="ECO:0000250"/>
    <property type="project" value="UniProtKB"/>
</dbReference>
<dbReference type="GO" id="GO:0010595">
    <property type="term" value="P:positive regulation of endothelial cell migration"/>
    <property type="evidence" value="ECO:0000250"/>
    <property type="project" value="UniProtKB"/>
</dbReference>
<dbReference type="GO" id="GO:1904906">
    <property type="term" value="P:positive regulation of endothelial cell-matrix adhesion via fibronectin"/>
    <property type="evidence" value="ECO:0000250"/>
    <property type="project" value="UniProtKB"/>
</dbReference>
<dbReference type="GO" id="GO:1903672">
    <property type="term" value="P:positive regulation of sprouting angiogenesis"/>
    <property type="evidence" value="ECO:0000250"/>
    <property type="project" value="UniProtKB"/>
</dbReference>
<dbReference type="GO" id="GO:0006486">
    <property type="term" value="P:protein glycosylation"/>
    <property type="evidence" value="ECO:0000250"/>
    <property type="project" value="UniProtKB"/>
</dbReference>
<dbReference type="GO" id="GO:0030155">
    <property type="term" value="P:regulation of cell adhesion"/>
    <property type="evidence" value="ECO:0000250"/>
    <property type="project" value="UniProtKB"/>
</dbReference>
<dbReference type="GO" id="GO:0001936">
    <property type="term" value="P:regulation of endothelial cell proliferation"/>
    <property type="evidence" value="ECO:0000250"/>
    <property type="project" value="UniProtKB"/>
</dbReference>
<dbReference type="CDD" id="cd11301">
    <property type="entry name" value="Fut1_Fut2_like"/>
    <property type="match status" value="1"/>
</dbReference>
<dbReference type="InterPro" id="IPR002516">
    <property type="entry name" value="Glyco_trans_11"/>
</dbReference>
<dbReference type="PANTHER" id="PTHR11927">
    <property type="entry name" value="GALACTOSIDE 2-L-FUCOSYLTRANSFERASE"/>
    <property type="match status" value="1"/>
</dbReference>
<dbReference type="PANTHER" id="PTHR11927:SF4">
    <property type="entry name" value="GALACTOSIDE ALPHA-(1,2)-FUCOSYLTRANSFERASE 1"/>
    <property type="match status" value="1"/>
</dbReference>
<dbReference type="Pfam" id="PF01531">
    <property type="entry name" value="Glyco_transf_11"/>
    <property type="match status" value="1"/>
</dbReference>
<protein>
    <recommendedName>
        <fullName evidence="3">Galactoside alpha-(1,2)-fucosyltransferase 1</fullName>
    </recommendedName>
    <alternativeName>
        <fullName>Alpha(1,2)FT 1</fullName>
    </alternativeName>
    <alternativeName>
        <fullName>Fucosyltransferase 1</fullName>
    </alternativeName>
    <alternativeName>
        <fullName>GDP-L-fucose:beta-D-galactoside 2-alpha-L-fucosyltransferase 1</fullName>
    </alternativeName>
    <alternativeName>
        <fullName evidence="2">Type 1 galactoside alpha-(1,2)-fucosyltransferase FUT1</fullName>
        <ecNumber evidence="2">2.4.1.69</ecNumber>
    </alternativeName>
    <alternativeName>
        <fullName evidence="3">Type 2 galactoside alpha-(1,2)-fucosyltransferase FUT1</fullName>
        <ecNumber evidence="3">2.4.1.344</ecNumber>
    </alternativeName>
</protein>
<gene>
    <name evidence="3" type="primary">FUT1</name>
</gene>
<feature type="chain" id="PRO_0000149103" description="Galactoside alpha-(1,2)-fucosyltransferase 1">
    <location>
        <begin position="1"/>
        <end position="365"/>
    </location>
</feature>
<feature type="topological domain" description="Cytoplasmic" evidence="4">
    <location>
        <begin position="1"/>
        <end position="8"/>
    </location>
</feature>
<feature type="transmembrane region" description="Helical; Signal-anchor for type II membrane protein" evidence="4">
    <location>
        <begin position="9"/>
        <end position="25"/>
    </location>
</feature>
<feature type="topological domain" description="Lumenal" evidence="4">
    <location>
        <begin position="26"/>
        <end position="365"/>
    </location>
</feature>
<feature type="glycosylation site" description="N-linked (GlcNAc...) asparagine" evidence="4">
    <location>
        <position position="65"/>
    </location>
</feature>
<feature type="glycosylation site" description="N-linked (GlcNAc...) asparagine" evidence="4">
    <location>
        <position position="301"/>
    </location>
</feature>
<feature type="glycosylation site" description="N-linked (GlcNAc...) asparagine" evidence="4">
    <location>
        <position position="327"/>
    </location>
</feature>